<accession>B5R153</accession>
<name>CDD_SALEP</name>
<organism>
    <name type="scientific">Salmonella enteritidis PT4 (strain P125109)</name>
    <dbReference type="NCBI Taxonomy" id="550537"/>
    <lineage>
        <taxon>Bacteria</taxon>
        <taxon>Pseudomonadati</taxon>
        <taxon>Pseudomonadota</taxon>
        <taxon>Gammaproteobacteria</taxon>
        <taxon>Enterobacterales</taxon>
        <taxon>Enterobacteriaceae</taxon>
        <taxon>Salmonella</taxon>
    </lineage>
</organism>
<reference key="1">
    <citation type="journal article" date="2008" name="Genome Res.">
        <title>Comparative genome analysis of Salmonella enteritidis PT4 and Salmonella gallinarum 287/91 provides insights into evolutionary and host adaptation pathways.</title>
        <authorList>
            <person name="Thomson N.R."/>
            <person name="Clayton D.J."/>
            <person name="Windhorst D."/>
            <person name="Vernikos G."/>
            <person name="Davidson S."/>
            <person name="Churcher C."/>
            <person name="Quail M.A."/>
            <person name="Stevens M."/>
            <person name="Jones M.A."/>
            <person name="Watson M."/>
            <person name="Barron A."/>
            <person name="Layton A."/>
            <person name="Pickard D."/>
            <person name="Kingsley R.A."/>
            <person name="Bignell A."/>
            <person name="Clark L."/>
            <person name="Harris B."/>
            <person name="Ormond D."/>
            <person name="Abdellah Z."/>
            <person name="Brooks K."/>
            <person name="Cherevach I."/>
            <person name="Chillingworth T."/>
            <person name="Woodward J."/>
            <person name="Norberczak H."/>
            <person name="Lord A."/>
            <person name="Arrowsmith C."/>
            <person name="Jagels K."/>
            <person name="Moule S."/>
            <person name="Mungall K."/>
            <person name="Saunders M."/>
            <person name="Whitehead S."/>
            <person name="Chabalgoity J.A."/>
            <person name="Maskell D."/>
            <person name="Humphreys T."/>
            <person name="Roberts M."/>
            <person name="Barrow P.A."/>
            <person name="Dougan G."/>
            <person name="Parkhill J."/>
        </authorList>
    </citation>
    <scope>NUCLEOTIDE SEQUENCE [LARGE SCALE GENOMIC DNA]</scope>
    <source>
        <strain>P125109</strain>
    </source>
</reference>
<protein>
    <recommendedName>
        <fullName evidence="1">Cytidine deaminase</fullName>
        <ecNumber evidence="1">3.5.4.5</ecNumber>
    </recommendedName>
    <alternativeName>
        <fullName evidence="1">Cytidine aminohydrolase</fullName>
        <shortName evidence="1">CDA</shortName>
    </alternativeName>
</protein>
<feature type="chain" id="PRO_1000147109" description="Cytidine deaminase">
    <location>
        <begin position="1"/>
        <end position="294"/>
    </location>
</feature>
<feature type="domain" description="CMP/dCMP-type deaminase 1" evidence="2">
    <location>
        <begin position="48"/>
        <end position="168"/>
    </location>
</feature>
<feature type="domain" description="CMP/dCMP-type deaminase 2" evidence="2">
    <location>
        <begin position="186"/>
        <end position="294"/>
    </location>
</feature>
<feature type="active site" description="Proton donor" evidence="1">
    <location>
        <position position="104"/>
    </location>
</feature>
<feature type="binding site" evidence="1">
    <location>
        <begin position="89"/>
        <end position="91"/>
    </location>
    <ligand>
        <name>substrate</name>
    </ligand>
</feature>
<feature type="binding site" evidence="1">
    <location>
        <position position="102"/>
    </location>
    <ligand>
        <name>Zn(2+)</name>
        <dbReference type="ChEBI" id="CHEBI:29105"/>
        <note>catalytic</note>
    </ligand>
</feature>
<feature type="binding site" evidence="1">
    <location>
        <position position="129"/>
    </location>
    <ligand>
        <name>Zn(2+)</name>
        <dbReference type="ChEBI" id="CHEBI:29105"/>
        <note>catalytic</note>
    </ligand>
</feature>
<feature type="binding site" evidence="1">
    <location>
        <position position="132"/>
    </location>
    <ligand>
        <name>Zn(2+)</name>
        <dbReference type="ChEBI" id="CHEBI:29105"/>
        <note>catalytic</note>
    </ligand>
</feature>
<evidence type="ECO:0000255" key="1">
    <source>
        <dbReference type="HAMAP-Rule" id="MF_01558"/>
    </source>
</evidence>
<evidence type="ECO:0000255" key="2">
    <source>
        <dbReference type="PROSITE-ProRule" id="PRU01083"/>
    </source>
</evidence>
<sequence length="294" mass="31619">MHPRFQTAFAQLADNLQSALAPILADHHFPAMLTAEQVSTLKNTAGLDEDALAFALLPLAAACARTDLSHFNVGAIARGVSGNWYFGANMEFLGATMQQTVHAEQSAISHAWLRGEKGLAAVTVNYTPCGHCRQFMNELNSGLDLRIHLPGRAPHTLRDYLPDAFGPKDLEIKTLLMDEQDHGFTLTGDTLTQAAITAANKSHMPYSHSPSGVALECKDGRIFTGSYAENAAFNPTLPPLQGALNLLSLNGYDYADIQRAILAEKGDAALIQWDATAATLKALGCHNIDRVLLG</sequence>
<keyword id="KW-0378">Hydrolase</keyword>
<keyword id="KW-0479">Metal-binding</keyword>
<keyword id="KW-0862">Zinc</keyword>
<comment type="function">
    <text evidence="1">This enzyme scavenges exogenous and endogenous cytidine and 2'-deoxycytidine for UMP synthesis.</text>
</comment>
<comment type="catalytic activity">
    <reaction evidence="1">
        <text>cytidine + H2O + H(+) = uridine + NH4(+)</text>
        <dbReference type="Rhea" id="RHEA:16069"/>
        <dbReference type="ChEBI" id="CHEBI:15377"/>
        <dbReference type="ChEBI" id="CHEBI:15378"/>
        <dbReference type="ChEBI" id="CHEBI:16704"/>
        <dbReference type="ChEBI" id="CHEBI:17562"/>
        <dbReference type="ChEBI" id="CHEBI:28938"/>
        <dbReference type="EC" id="3.5.4.5"/>
    </reaction>
</comment>
<comment type="catalytic activity">
    <reaction evidence="1">
        <text>2'-deoxycytidine + H2O + H(+) = 2'-deoxyuridine + NH4(+)</text>
        <dbReference type="Rhea" id="RHEA:13433"/>
        <dbReference type="ChEBI" id="CHEBI:15377"/>
        <dbReference type="ChEBI" id="CHEBI:15378"/>
        <dbReference type="ChEBI" id="CHEBI:15698"/>
        <dbReference type="ChEBI" id="CHEBI:16450"/>
        <dbReference type="ChEBI" id="CHEBI:28938"/>
        <dbReference type="EC" id="3.5.4.5"/>
    </reaction>
</comment>
<comment type="cofactor">
    <cofactor evidence="1">
        <name>Zn(2+)</name>
        <dbReference type="ChEBI" id="CHEBI:29105"/>
    </cofactor>
    <text evidence="1">Binds 1 zinc ion.</text>
</comment>
<comment type="subunit">
    <text evidence="1">Homodimer.</text>
</comment>
<comment type="similarity">
    <text evidence="1">Belongs to the cytidine and deoxycytidylate deaminase family.</text>
</comment>
<gene>
    <name evidence="1" type="primary">cdd</name>
    <name type="ordered locus">SEN2176</name>
</gene>
<proteinExistence type="inferred from homology"/>
<dbReference type="EC" id="3.5.4.5" evidence="1"/>
<dbReference type="EMBL" id="AM933172">
    <property type="protein sequence ID" value="CAR33761.1"/>
    <property type="molecule type" value="Genomic_DNA"/>
</dbReference>
<dbReference type="RefSeq" id="WP_000553526.1">
    <property type="nucleotide sequence ID" value="NC_011294.1"/>
</dbReference>
<dbReference type="SMR" id="B5R153"/>
<dbReference type="KEGG" id="set:SEN2176"/>
<dbReference type="HOGENOM" id="CLU_052424_0_0_6"/>
<dbReference type="Proteomes" id="UP000000613">
    <property type="component" value="Chromosome"/>
</dbReference>
<dbReference type="GO" id="GO:0005829">
    <property type="term" value="C:cytosol"/>
    <property type="evidence" value="ECO:0007669"/>
    <property type="project" value="TreeGrafter"/>
</dbReference>
<dbReference type="GO" id="GO:0004126">
    <property type="term" value="F:cytidine deaminase activity"/>
    <property type="evidence" value="ECO:0007669"/>
    <property type="project" value="UniProtKB-UniRule"/>
</dbReference>
<dbReference type="GO" id="GO:0042802">
    <property type="term" value="F:identical protein binding"/>
    <property type="evidence" value="ECO:0007669"/>
    <property type="project" value="UniProtKB-ARBA"/>
</dbReference>
<dbReference type="GO" id="GO:0008270">
    <property type="term" value="F:zinc ion binding"/>
    <property type="evidence" value="ECO:0007669"/>
    <property type="project" value="UniProtKB-UniRule"/>
</dbReference>
<dbReference type="GO" id="GO:0009972">
    <property type="term" value="P:cytidine deamination"/>
    <property type="evidence" value="ECO:0007669"/>
    <property type="project" value="InterPro"/>
</dbReference>
<dbReference type="CDD" id="cd01283">
    <property type="entry name" value="cytidine_deaminase"/>
    <property type="match status" value="2"/>
</dbReference>
<dbReference type="FunFam" id="3.40.140.10:FF:000006">
    <property type="entry name" value="Cytidine deaminase"/>
    <property type="match status" value="1"/>
</dbReference>
<dbReference type="FunFam" id="3.40.140.10:FF:000007">
    <property type="entry name" value="Cytidine deaminase"/>
    <property type="match status" value="1"/>
</dbReference>
<dbReference type="Gene3D" id="3.40.140.10">
    <property type="entry name" value="Cytidine Deaminase, domain 2"/>
    <property type="match status" value="2"/>
</dbReference>
<dbReference type="HAMAP" id="MF_01558">
    <property type="entry name" value="Cyt_deam"/>
    <property type="match status" value="1"/>
</dbReference>
<dbReference type="InterPro" id="IPR016192">
    <property type="entry name" value="APOBEC/CMP_deaminase_Zn-bd"/>
</dbReference>
<dbReference type="InterPro" id="IPR002125">
    <property type="entry name" value="CMP_dCMP_dom"/>
</dbReference>
<dbReference type="InterPro" id="IPR013171">
    <property type="entry name" value="Cyd/dCyd_deaminase_Zn-bd"/>
</dbReference>
<dbReference type="InterPro" id="IPR050202">
    <property type="entry name" value="Cyt/Deoxycyt_deaminase"/>
</dbReference>
<dbReference type="InterPro" id="IPR006263">
    <property type="entry name" value="Cyt_deam_dimer"/>
</dbReference>
<dbReference type="InterPro" id="IPR016193">
    <property type="entry name" value="Cytidine_deaminase-like"/>
</dbReference>
<dbReference type="InterPro" id="IPR020797">
    <property type="entry name" value="Cytidine_deaminase_bacteria"/>
</dbReference>
<dbReference type="NCBIfam" id="TIGR01355">
    <property type="entry name" value="cyt_deam_dimer"/>
    <property type="match status" value="1"/>
</dbReference>
<dbReference type="NCBIfam" id="NF006537">
    <property type="entry name" value="PRK09027.1"/>
    <property type="match status" value="1"/>
</dbReference>
<dbReference type="PANTHER" id="PTHR11644">
    <property type="entry name" value="CYTIDINE DEAMINASE"/>
    <property type="match status" value="1"/>
</dbReference>
<dbReference type="PANTHER" id="PTHR11644:SF2">
    <property type="entry name" value="CYTIDINE DEAMINASE"/>
    <property type="match status" value="1"/>
</dbReference>
<dbReference type="Pfam" id="PF00383">
    <property type="entry name" value="dCMP_cyt_deam_1"/>
    <property type="match status" value="1"/>
</dbReference>
<dbReference type="Pfam" id="PF08211">
    <property type="entry name" value="dCMP_cyt_deam_2"/>
    <property type="match status" value="1"/>
</dbReference>
<dbReference type="PIRSF" id="PIRSF006334">
    <property type="entry name" value="Cdd_plus_pseudo"/>
    <property type="match status" value="1"/>
</dbReference>
<dbReference type="SUPFAM" id="SSF53927">
    <property type="entry name" value="Cytidine deaminase-like"/>
    <property type="match status" value="2"/>
</dbReference>
<dbReference type="PROSITE" id="PS00903">
    <property type="entry name" value="CYT_DCMP_DEAMINASES_1"/>
    <property type="match status" value="1"/>
</dbReference>
<dbReference type="PROSITE" id="PS51747">
    <property type="entry name" value="CYT_DCMP_DEAMINASES_2"/>
    <property type="match status" value="2"/>
</dbReference>